<name>BGLA_NIACI</name>
<evidence type="ECO:0000255" key="1"/>
<evidence type="ECO:0000255" key="2">
    <source>
        <dbReference type="PROSITE-ProRule" id="PRU10055"/>
    </source>
</evidence>
<evidence type="ECO:0000269" key="3">
    <source>
    </source>
</evidence>
<evidence type="ECO:0000305" key="4"/>
<evidence type="ECO:0007829" key="5">
    <source>
        <dbReference type="PDB" id="1QOX"/>
    </source>
</evidence>
<proteinExistence type="evidence at protein level"/>
<reference key="1">
    <citation type="journal article" date="1993" name="Appl. Environ. Microbiol.">
        <title>Purification, characterization, gene cloning, and sequencing of a new beta-glucosidase from Bacillus circulans subsp. alkalophilus.</title>
        <authorList>
            <person name="Paavilainen S.K."/>
            <person name="Hellman J."/>
            <person name="Korpela T."/>
        </authorList>
    </citation>
    <scope>NUCLEOTIDE SEQUENCE [GENOMIC DNA]</scope>
    <scope>PROTEIN SEQUENCE OF 2-29</scope>
    <source>
        <strain>ATCC 21783 / subsp. Alkalophilus</strain>
    </source>
</reference>
<dbReference type="EC" id="3.2.1.21"/>
<dbReference type="EMBL" id="M96979">
    <property type="protein sequence ID" value="AAA22266.1"/>
    <property type="molecule type" value="Genomic_DNA"/>
</dbReference>
<dbReference type="PIR" id="A48969">
    <property type="entry name" value="A48969"/>
</dbReference>
<dbReference type="PDB" id="1QOX">
    <property type="method" value="X-ray"/>
    <property type="resolution" value="2.70 A"/>
    <property type="chains" value="A/B/C/D/E/F/G/H/I/J/K/L/M/N/O/P=2-450"/>
</dbReference>
<dbReference type="PDBsum" id="1QOX"/>
<dbReference type="SMR" id="Q03506"/>
<dbReference type="MINT" id="Q03506"/>
<dbReference type="CAZy" id="GH1">
    <property type="family name" value="Glycoside Hydrolase Family 1"/>
</dbReference>
<dbReference type="EvolutionaryTrace" id="Q03506"/>
<dbReference type="GO" id="GO:0008422">
    <property type="term" value="F:beta-glucosidase activity"/>
    <property type="evidence" value="ECO:0007669"/>
    <property type="project" value="UniProtKB-EC"/>
</dbReference>
<dbReference type="GO" id="GO:0030245">
    <property type="term" value="P:cellulose catabolic process"/>
    <property type="evidence" value="ECO:0007669"/>
    <property type="project" value="UniProtKB-KW"/>
</dbReference>
<dbReference type="FunFam" id="3.20.20.80:FF:000004">
    <property type="entry name" value="Beta-glucosidase 6-phospho-beta-glucosidase"/>
    <property type="match status" value="1"/>
</dbReference>
<dbReference type="Gene3D" id="3.20.20.80">
    <property type="entry name" value="Glycosidases"/>
    <property type="match status" value="1"/>
</dbReference>
<dbReference type="InterPro" id="IPR001360">
    <property type="entry name" value="Glyco_hydro_1"/>
</dbReference>
<dbReference type="InterPro" id="IPR018120">
    <property type="entry name" value="Glyco_hydro_1_AS"/>
</dbReference>
<dbReference type="InterPro" id="IPR017736">
    <property type="entry name" value="Glyco_hydro_1_beta-glucosidase"/>
</dbReference>
<dbReference type="InterPro" id="IPR033132">
    <property type="entry name" value="Glyco_hydro_1_N_CS"/>
</dbReference>
<dbReference type="InterPro" id="IPR017853">
    <property type="entry name" value="Glycoside_hydrolase_SF"/>
</dbReference>
<dbReference type="NCBIfam" id="TIGR03356">
    <property type="entry name" value="BGL"/>
    <property type="match status" value="1"/>
</dbReference>
<dbReference type="PANTHER" id="PTHR10353">
    <property type="entry name" value="GLYCOSYL HYDROLASE"/>
    <property type="match status" value="1"/>
</dbReference>
<dbReference type="PANTHER" id="PTHR10353:SF36">
    <property type="entry name" value="LP05116P"/>
    <property type="match status" value="1"/>
</dbReference>
<dbReference type="Pfam" id="PF00232">
    <property type="entry name" value="Glyco_hydro_1"/>
    <property type="match status" value="1"/>
</dbReference>
<dbReference type="PRINTS" id="PR00131">
    <property type="entry name" value="GLHYDRLASE1"/>
</dbReference>
<dbReference type="SUPFAM" id="SSF51445">
    <property type="entry name" value="(Trans)glycosidases"/>
    <property type="match status" value="1"/>
</dbReference>
<dbReference type="PROSITE" id="PS00572">
    <property type="entry name" value="GLYCOSYL_HYDROL_F1_1"/>
    <property type="match status" value="1"/>
</dbReference>
<dbReference type="PROSITE" id="PS00653">
    <property type="entry name" value="GLYCOSYL_HYDROL_F1_2"/>
    <property type="match status" value="1"/>
</dbReference>
<comment type="catalytic activity">
    <reaction>
        <text>Hydrolysis of terminal, non-reducing beta-D-glucosyl residues with release of beta-D-glucose.</text>
        <dbReference type="EC" id="3.2.1.21"/>
    </reaction>
</comment>
<comment type="similarity">
    <text evidence="4">Belongs to the glycosyl hydrolase 1 family.</text>
</comment>
<sequence length="450" mass="51303">MSIHMFPSDFKWGVATAAYQIEGAYNEDGRGMSIWDTFAHTPGKVKNGDNGNVACDSYHRVEEDVQLLKDLGVKVYRFSISWPRVLPQGTGEVNRAGLDYYHRLVDELLANGIEPFCTLYHWDLPQALQDQGGWGSRITIDAFAEYAELMFKELGGKIKQWITFNEPWCMAFLSNYLGVHAPGNKDLQLAIDVSHHLLVAHGRAVTLFRELGISGEIGIAPNTSWAVPYRRTKEDMEACLRVNGWSGDWYLDPIYFGEYPKFMLDWYENLGYKPPIVDGDMELIHQPIDFIGINYYTSSMNRYNPGEAGGMLSSEAISMGAPKTDIGWEIYAEGLYDLLRYTADKYGNPTLYITENGACYNDGLSLDGRIHDQRRIDYLAMHLIQASRAIEDGINLKGYMEWSLMDNFEWAEGYGMRFGLVHVDYDTLVRTPKDSFYWYKGVISRGWLDL</sequence>
<protein>
    <recommendedName>
        <fullName>Beta-glucosidase</fullName>
        <ecNumber>3.2.1.21</ecNumber>
    </recommendedName>
    <alternativeName>
        <fullName>Amygdalase</fullName>
    </alternativeName>
    <alternativeName>
        <fullName>Beta-D-glucoside glucohydrolase</fullName>
    </alternativeName>
    <alternativeName>
        <fullName>Cellobiase</fullName>
    </alternativeName>
    <alternativeName>
        <fullName>Gentiobiase</fullName>
    </alternativeName>
</protein>
<feature type="initiator methionine" description="Removed" evidence="3">
    <location>
        <position position="1"/>
    </location>
</feature>
<feature type="chain" id="PRO_0000063870" description="Beta-glucosidase">
    <location>
        <begin position="2"/>
        <end position="450"/>
    </location>
</feature>
<feature type="active site" description="Proton donor" evidence="1">
    <location>
        <position position="166"/>
    </location>
</feature>
<feature type="active site" description="Nucleophile" evidence="2">
    <location>
        <position position="355"/>
    </location>
</feature>
<feature type="strand" evidence="5">
    <location>
        <begin position="3"/>
        <end position="5"/>
    </location>
</feature>
<feature type="strand" evidence="5">
    <location>
        <begin position="11"/>
        <end position="15"/>
    </location>
</feature>
<feature type="helix" evidence="5">
    <location>
        <begin position="18"/>
        <end position="21"/>
    </location>
</feature>
<feature type="helix" evidence="5">
    <location>
        <begin position="34"/>
        <end position="40"/>
    </location>
</feature>
<feature type="turn" evidence="5">
    <location>
        <begin position="42"/>
        <end position="44"/>
    </location>
</feature>
<feature type="helix" evidence="5">
    <location>
        <begin position="46"/>
        <end position="48"/>
    </location>
</feature>
<feature type="turn" evidence="5">
    <location>
        <begin position="51"/>
        <end position="55"/>
    </location>
</feature>
<feature type="helix" evidence="5">
    <location>
        <begin position="61"/>
        <end position="71"/>
    </location>
</feature>
<feature type="strand" evidence="5">
    <location>
        <begin position="74"/>
        <end position="79"/>
    </location>
</feature>
<feature type="helix" evidence="5">
    <location>
        <begin position="82"/>
        <end position="85"/>
    </location>
</feature>
<feature type="strand" evidence="5">
    <location>
        <begin position="89"/>
        <end position="92"/>
    </location>
</feature>
<feature type="helix" evidence="5">
    <location>
        <begin position="95"/>
        <end position="110"/>
    </location>
</feature>
<feature type="strand" evidence="5">
    <location>
        <begin position="114"/>
        <end position="122"/>
    </location>
</feature>
<feature type="helix" evidence="5">
    <location>
        <begin position="126"/>
        <end position="129"/>
    </location>
</feature>
<feature type="turn" evidence="5">
    <location>
        <begin position="130"/>
        <end position="132"/>
    </location>
</feature>
<feature type="helix" evidence="5">
    <location>
        <begin position="133"/>
        <end position="135"/>
    </location>
</feature>
<feature type="helix" evidence="5">
    <location>
        <begin position="138"/>
        <end position="154"/>
    </location>
</feature>
<feature type="turn" evidence="5">
    <location>
        <begin position="155"/>
        <end position="157"/>
    </location>
</feature>
<feature type="strand" evidence="5">
    <location>
        <begin position="160"/>
        <end position="165"/>
    </location>
</feature>
<feature type="helix" evidence="5">
    <location>
        <begin position="167"/>
        <end position="175"/>
    </location>
</feature>
<feature type="helix" evidence="5">
    <location>
        <begin position="187"/>
        <end position="210"/>
    </location>
</feature>
<feature type="strand" evidence="5">
    <location>
        <begin position="215"/>
        <end position="220"/>
    </location>
</feature>
<feature type="strand" evidence="5">
    <location>
        <begin position="225"/>
        <end position="231"/>
    </location>
</feature>
<feature type="helix" evidence="5">
    <location>
        <begin position="233"/>
        <end position="244"/>
    </location>
</feature>
<feature type="turn" evidence="5">
    <location>
        <begin position="245"/>
        <end position="247"/>
    </location>
</feature>
<feature type="helix" evidence="5">
    <location>
        <begin position="248"/>
        <end position="255"/>
    </location>
</feature>
<feature type="helix" evidence="5">
    <location>
        <begin position="261"/>
        <end position="269"/>
    </location>
</feature>
<feature type="helix" evidence="5">
    <location>
        <begin position="280"/>
        <end position="284"/>
    </location>
</feature>
<feature type="strand" evidence="5">
    <location>
        <begin position="289"/>
        <end position="294"/>
    </location>
</feature>
<feature type="strand" evidence="5">
    <location>
        <begin position="298"/>
        <end position="303"/>
    </location>
</feature>
<feature type="helix" evidence="5">
    <location>
        <begin position="307"/>
        <end position="309"/>
    </location>
</feature>
<feature type="turn" evidence="5">
    <location>
        <begin position="310"/>
        <end position="313"/>
    </location>
</feature>
<feature type="strand" evidence="5">
    <location>
        <begin position="314"/>
        <end position="316"/>
    </location>
</feature>
<feature type="helix" evidence="5">
    <location>
        <begin position="333"/>
        <end position="345"/>
    </location>
</feature>
<feature type="strand" evidence="5">
    <location>
        <begin position="351"/>
        <end position="355"/>
    </location>
</feature>
<feature type="helix" evidence="5">
    <location>
        <begin position="373"/>
        <end position="391"/>
    </location>
</feature>
<feature type="strand" evidence="5">
    <location>
        <begin position="396"/>
        <end position="402"/>
    </location>
</feature>
<feature type="helix" evidence="5">
    <location>
        <begin position="410"/>
        <end position="412"/>
    </location>
</feature>
<feature type="strand" evidence="5">
    <location>
        <begin position="420"/>
        <end position="424"/>
    </location>
</feature>
<feature type="turn" evidence="5">
    <location>
        <begin position="425"/>
        <end position="428"/>
    </location>
</feature>
<feature type="strand" evidence="5">
    <location>
        <begin position="429"/>
        <end position="432"/>
    </location>
</feature>
<feature type="helix" evidence="5">
    <location>
        <begin position="434"/>
        <end position="445"/>
    </location>
</feature>
<feature type="strand" evidence="5">
    <location>
        <begin position="446"/>
        <end position="449"/>
    </location>
</feature>
<keyword id="KW-0002">3D-structure</keyword>
<keyword id="KW-0119">Carbohydrate metabolism</keyword>
<keyword id="KW-0136">Cellulose degradation</keyword>
<keyword id="KW-0903">Direct protein sequencing</keyword>
<keyword id="KW-0326">Glycosidase</keyword>
<keyword id="KW-0378">Hydrolase</keyword>
<keyword id="KW-0624">Polysaccharide degradation</keyword>
<gene>
    <name type="primary">bglA</name>
</gene>
<accession>Q03506</accession>
<organism>
    <name type="scientific">Niallia circulans</name>
    <name type="common">Bacillus circulans</name>
    <dbReference type="NCBI Taxonomy" id="1397"/>
    <lineage>
        <taxon>Bacteria</taxon>
        <taxon>Bacillati</taxon>
        <taxon>Bacillota</taxon>
        <taxon>Bacilli</taxon>
        <taxon>Bacillales</taxon>
        <taxon>Bacillaceae</taxon>
        <taxon>Niallia</taxon>
    </lineage>
</organism>